<protein>
    <recommendedName>
        <fullName evidence="1">Proteasomal ubiquitin receptor ADRM1 homolog rpn1302</fullName>
    </recommendedName>
    <alternativeName>
        <fullName evidence="6">Regulatory particle non-ATPase 13ba protein</fullName>
    </alternativeName>
</protein>
<feature type="chain" id="PRO_0000351078" description="Proteasomal ubiquitin receptor ADRM1 homolog rpn1302">
    <location>
        <begin position="1"/>
        <end position="388"/>
    </location>
</feature>
<feature type="domain" description="Pru" evidence="2">
    <location>
        <begin position="15"/>
        <end position="132"/>
    </location>
</feature>
<feature type="region of interest" description="Disordered" evidence="3">
    <location>
        <begin position="202"/>
        <end position="227"/>
    </location>
</feature>
<feature type="region of interest" description="Disordered" evidence="3">
    <location>
        <begin position="368"/>
        <end position="388"/>
    </location>
</feature>
<feature type="compositionally biased region" description="Acidic residues" evidence="3">
    <location>
        <begin position="368"/>
        <end position="377"/>
    </location>
</feature>
<feature type="compositionally biased region" description="Basic and acidic residues" evidence="3">
    <location>
        <begin position="378"/>
        <end position="388"/>
    </location>
</feature>
<dbReference type="EMBL" id="CU329672">
    <property type="protein sequence ID" value="CAB53088.1"/>
    <property type="molecule type" value="Genomic_DNA"/>
</dbReference>
<dbReference type="PIR" id="T41089">
    <property type="entry name" value="T41089"/>
</dbReference>
<dbReference type="RefSeq" id="NP_588003.1">
    <property type="nucleotide sequence ID" value="NM_001022994.2"/>
</dbReference>
<dbReference type="SMR" id="Q9USM1"/>
<dbReference type="BioGRID" id="275753">
    <property type="interactions" value="18"/>
</dbReference>
<dbReference type="ComplexPortal" id="CPX-9077">
    <property type="entry name" value="26S proteasome complex"/>
</dbReference>
<dbReference type="FunCoup" id="Q9USM1">
    <property type="interactions" value="36"/>
</dbReference>
<dbReference type="STRING" id="284812.Q9USM1"/>
<dbReference type="iPTMnet" id="Q9USM1"/>
<dbReference type="PaxDb" id="4896-SPCC16A11.16c.1"/>
<dbReference type="EnsemblFungi" id="SPCC16A11.16c.1">
    <property type="protein sequence ID" value="SPCC16A11.16c.1:pep"/>
    <property type="gene ID" value="SPCC16A11.16c"/>
</dbReference>
<dbReference type="GeneID" id="2539182"/>
<dbReference type="KEGG" id="spo:2539182"/>
<dbReference type="PomBase" id="SPCC16A11.16c">
    <property type="gene designation" value="rpn1302"/>
</dbReference>
<dbReference type="VEuPathDB" id="FungiDB:SPCC16A11.16c"/>
<dbReference type="eggNOG" id="KOG3037">
    <property type="taxonomic scope" value="Eukaryota"/>
</dbReference>
<dbReference type="HOGENOM" id="CLU_041798_0_0_1"/>
<dbReference type="InParanoid" id="Q9USM1"/>
<dbReference type="OMA" id="SQIHFYW"/>
<dbReference type="PRO" id="PR:Q9USM1"/>
<dbReference type="Proteomes" id="UP000002485">
    <property type="component" value="Chromosome III"/>
</dbReference>
<dbReference type="GO" id="GO:0005829">
    <property type="term" value="C:cytosol"/>
    <property type="evidence" value="ECO:0007005"/>
    <property type="project" value="PomBase"/>
</dbReference>
<dbReference type="GO" id="GO:0005634">
    <property type="term" value="C:nucleus"/>
    <property type="evidence" value="ECO:0007005"/>
    <property type="project" value="PomBase"/>
</dbReference>
<dbReference type="GO" id="GO:0008541">
    <property type="term" value="C:proteasome regulatory particle, lid subcomplex"/>
    <property type="evidence" value="ECO:0000314"/>
    <property type="project" value="PomBase"/>
</dbReference>
<dbReference type="GO" id="GO:0061133">
    <property type="term" value="F:endopeptidase activator activity"/>
    <property type="evidence" value="ECO:0000318"/>
    <property type="project" value="GO_Central"/>
</dbReference>
<dbReference type="GO" id="GO:0070628">
    <property type="term" value="F:proteasome binding"/>
    <property type="evidence" value="ECO:0000318"/>
    <property type="project" value="GO_Central"/>
</dbReference>
<dbReference type="GO" id="GO:0043161">
    <property type="term" value="P:proteasome-mediated ubiquitin-dependent protein catabolic process"/>
    <property type="evidence" value="ECO:0000305"/>
    <property type="project" value="PomBase"/>
</dbReference>
<dbReference type="CDD" id="cd13314">
    <property type="entry name" value="PH_Rpn13"/>
    <property type="match status" value="1"/>
</dbReference>
<dbReference type="FunFam" id="2.30.29.70:FF:000001">
    <property type="entry name" value="Proteasomal ubiquitin receptor ADRM1"/>
    <property type="match status" value="1"/>
</dbReference>
<dbReference type="Gene3D" id="2.30.29.70">
    <property type="entry name" value="Proteasomal ubiquitin receptor Rpn13/ADRM1"/>
    <property type="match status" value="1"/>
</dbReference>
<dbReference type="InterPro" id="IPR006773">
    <property type="entry name" value="Rpn13/ADRM1"/>
</dbReference>
<dbReference type="InterPro" id="IPR044868">
    <property type="entry name" value="Rpn13/ADRM1_Pru"/>
</dbReference>
<dbReference type="InterPro" id="IPR038633">
    <property type="entry name" value="Rpn13/ADRM1_Pru_sf"/>
</dbReference>
<dbReference type="PANTHER" id="PTHR12225">
    <property type="entry name" value="ADHESION REGULATING MOLECULE 1 110 KDA CELL MEMBRANE GLYCOPROTEIN"/>
    <property type="match status" value="1"/>
</dbReference>
<dbReference type="PANTHER" id="PTHR12225:SF1">
    <property type="entry name" value="PROTEASOMAL UBIQUITIN RECEPTOR ADRM1 HOMOLOG RPN1302"/>
    <property type="match status" value="1"/>
</dbReference>
<dbReference type="Pfam" id="PF04683">
    <property type="entry name" value="Rpn13_ADRM1_Pru"/>
    <property type="match status" value="1"/>
</dbReference>
<dbReference type="PROSITE" id="PS51917">
    <property type="entry name" value="PRU"/>
    <property type="match status" value="1"/>
</dbReference>
<comment type="function">
    <text evidence="5 8">Component of the 26S proteasome, a multiprotein complex involved in the ATP-dependent degradation of ubiquitinated proteins. This complex plays a key role in the maintenance of protein homeostasis by removing misfolded or damaged proteins, which could impair cellular functions, and by removing proteins whose functions are no longer required (PubMed:21098295). Therefore, the proteasome participates in numerous cellular processes, including cell cycle progression, apoptosis, or DNA damage repair. Within the complex, functions as a proteasomal ubiquitin receptor (Probable).</text>
</comment>
<comment type="subunit">
    <text evidence="5">Component of the 19S proteasome regulatory particle complex (PubMed:21098295). The 2 S.pombe rpn13 homologs, rpn1301 and rpn1302 are present at a 0.2-1 ratio (PubMed:21098295).</text>
</comment>
<comment type="subcellular location">
    <subcellularLocation>
        <location evidence="4">Cytoplasm</location>
    </subcellularLocation>
    <subcellularLocation>
        <location evidence="4">Nucleus</location>
    </subcellularLocation>
</comment>
<comment type="domain">
    <text evidence="1">The Pru (pleckstrin-like receptor for ubiquitin) domain mediates interactions with rpn2 and ubiquitin.</text>
</comment>
<comment type="similarity">
    <text evidence="7">Belongs to the ADRM1 family.</text>
</comment>
<comment type="caution">
    <text evidence="7">The c-terminal sequence diverges from classical ADRM1 family proteins.</text>
</comment>
<name>RP13B_SCHPO</name>
<accession>Q9USM1</accession>
<sequence length="388" mass="43903">MESVFGRVRNETSERGKYGLVSVKAGKLQRKPGTNILQADHRKGVIYMQMASDELLHFYWKERARVSREVEDDYIIFPEEAEFIKIDECTTGRVYALKFKSSSQIHFYWMQEYSDEKDKETASLINQLIADPVNTTRTINSHNNSSSRGTDDSSTSQLLQLFGAASQDALQDFNWEVLSPTAEAPAILPRFPNVNESANMYRASSESNLNGPHATAGENGEDHEEATASPLDENIDYTHSRTLELLEQLQPLILNETTFVEPFSIDRESHRVITHPRVYPKIFPHSPSDLLRISGRAELSENRDFFKHLSSLMEAVAKPESESLREICNLSLEQVQSASGAELFLHALYDRLVNEGVIVISHITQEGSDGEVEEEGDVEMRESNEKDE</sequence>
<organism>
    <name type="scientific">Schizosaccharomyces pombe (strain 972 / ATCC 24843)</name>
    <name type="common">Fission yeast</name>
    <dbReference type="NCBI Taxonomy" id="284812"/>
    <lineage>
        <taxon>Eukaryota</taxon>
        <taxon>Fungi</taxon>
        <taxon>Dikarya</taxon>
        <taxon>Ascomycota</taxon>
        <taxon>Taphrinomycotina</taxon>
        <taxon>Schizosaccharomycetes</taxon>
        <taxon>Schizosaccharomycetales</taxon>
        <taxon>Schizosaccharomycetaceae</taxon>
        <taxon>Schizosaccharomyces</taxon>
    </lineage>
</organism>
<gene>
    <name type="primary">rpn1302</name>
    <name evidence="6" type="synonym">rpn13b</name>
    <name type="ORF">SPCC16A11.16c</name>
</gene>
<evidence type="ECO:0000250" key="1">
    <source>
        <dbReference type="UniProtKB" id="Q16186"/>
    </source>
</evidence>
<evidence type="ECO:0000255" key="2">
    <source>
        <dbReference type="PROSITE-ProRule" id="PRU01265"/>
    </source>
</evidence>
<evidence type="ECO:0000256" key="3">
    <source>
        <dbReference type="SAM" id="MobiDB-lite"/>
    </source>
</evidence>
<evidence type="ECO:0000269" key="4">
    <source>
    </source>
</evidence>
<evidence type="ECO:0000269" key="5">
    <source>
    </source>
</evidence>
<evidence type="ECO:0000303" key="6">
    <source>
    </source>
</evidence>
<evidence type="ECO:0000305" key="7"/>
<evidence type="ECO:0000305" key="8">
    <source>
    </source>
</evidence>
<keyword id="KW-0963">Cytoplasm</keyword>
<keyword id="KW-0539">Nucleus</keyword>
<keyword id="KW-1185">Reference proteome</keyword>
<reference key="1">
    <citation type="journal article" date="2002" name="Nature">
        <title>The genome sequence of Schizosaccharomyces pombe.</title>
        <authorList>
            <person name="Wood V."/>
            <person name="Gwilliam R."/>
            <person name="Rajandream M.A."/>
            <person name="Lyne M.H."/>
            <person name="Lyne R."/>
            <person name="Stewart A."/>
            <person name="Sgouros J.G."/>
            <person name="Peat N."/>
            <person name="Hayles J."/>
            <person name="Baker S.G."/>
            <person name="Basham D."/>
            <person name="Bowman S."/>
            <person name="Brooks K."/>
            <person name="Brown D."/>
            <person name="Brown S."/>
            <person name="Chillingworth T."/>
            <person name="Churcher C.M."/>
            <person name="Collins M."/>
            <person name="Connor R."/>
            <person name="Cronin A."/>
            <person name="Davis P."/>
            <person name="Feltwell T."/>
            <person name="Fraser A."/>
            <person name="Gentles S."/>
            <person name="Goble A."/>
            <person name="Hamlin N."/>
            <person name="Harris D.E."/>
            <person name="Hidalgo J."/>
            <person name="Hodgson G."/>
            <person name="Holroyd S."/>
            <person name="Hornsby T."/>
            <person name="Howarth S."/>
            <person name="Huckle E.J."/>
            <person name="Hunt S."/>
            <person name="Jagels K."/>
            <person name="James K.D."/>
            <person name="Jones L."/>
            <person name="Jones M."/>
            <person name="Leather S."/>
            <person name="McDonald S."/>
            <person name="McLean J."/>
            <person name="Mooney P."/>
            <person name="Moule S."/>
            <person name="Mungall K.L."/>
            <person name="Murphy L.D."/>
            <person name="Niblett D."/>
            <person name="Odell C."/>
            <person name="Oliver K."/>
            <person name="O'Neil S."/>
            <person name="Pearson D."/>
            <person name="Quail M.A."/>
            <person name="Rabbinowitsch E."/>
            <person name="Rutherford K.M."/>
            <person name="Rutter S."/>
            <person name="Saunders D."/>
            <person name="Seeger K."/>
            <person name="Sharp S."/>
            <person name="Skelton J."/>
            <person name="Simmonds M.N."/>
            <person name="Squares R."/>
            <person name="Squares S."/>
            <person name="Stevens K."/>
            <person name="Taylor K."/>
            <person name="Taylor R.G."/>
            <person name="Tivey A."/>
            <person name="Walsh S.V."/>
            <person name="Warren T."/>
            <person name="Whitehead S."/>
            <person name="Woodward J.R."/>
            <person name="Volckaert G."/>
            <person name="Aert R."/>
            <person name="Robben J."/>
            <person name="Grymonprez B."/>
            <person name="Weltjens I."/>
            <person name="Vanstreels E."/>
            <person name="Rieger M."/>
            <person name="Schaefer M."/>
            <person name="Mueller-Auer S."/>
            <person name="Gabel C."/>
            <person name="Fuchs M."/>
            <person name="Duesterhoeft A."/>
            <person name="Fritzc C."/>
            <person name="Holzer E."/>
            <person name="Moestl D."/>
            <person name="Hilbert H."/>
            <person name="Borzym K."/>
            <person name="Langer I."/>
            <person name="Beck A."/>
            <person name="Lehrach H."/>
            <person name="Reinhardt R."/>
            <person name="Pohl T.M."/>
            <person name="Eger P."/>
            <person name="Zimmermann W."/>
            <person name="Wedler H."/>
            <person name="Wambutt R."/>
            <person name="Purnelle B."/>
            <person name="Goffeau A."/>
            <person name="Cadieu E."/>
            <person name="Dreano S."/>
            <person name="Gloux S."/>
            <person name="Lelaure V."/>
            <person name="Mottier S."/>
            <person name="Galibert F."/>
            <person name="Aves S.J."/>
            <person name="Xiang Z."/>
            <person name="Hunt C."/>
            <person name="Moore K."/>
            <person name="Hurst S.M."/>
            <person name="Lucas M."/>
            <person name="Rochet M."/>
            <person name="Gaillardin C."/>
            <person name="Tallada V.A."/>
            <person name="Garzon A."/>
            <person name="Thode G."/>
            <person name="Daga R.R."/>
            <person name="Cruzado L."/>
            <person name="Jimenez J."/>
            <person name="Sanchez M."/>
            <person name="del Rey F."/>
            <person name="Benito J."/>
            <person name="Dominguez A."/>
            <person name="Revuelta J.L."/>
            <person name="Moreno S."/>
            <person name="Armstrong J."/>
            <person name="Forsburg S.L."/>
            <person name="Cerutti L."/>
            <person name="Lowe T."/>
            <person name="McCombie W.R."/>
            <person name="Paulsen I."/>
            <person name="Potashkin J."/>
            <person name="Shpakovski G.V."/>
            <person name="Ussery D."/>
            <person name="Barrell B.G."/>
            <person name="Nurse P."/>
        </authorList>
    </citation>
    <scope>NUCLEOTIDE SEQUENCE [LARGE SCALE GENOMIC DNA]</scope>
    <source>
        <strain>972 / ATCC 24843</strain>
    </source>
</reference>
<reference key="2">
    <citation type="journal article" date="2006" name="Nat. Biotechnol.">
        <title>ORFeome cloning and global analysis of protein localization in the fission yeast Schizosaccharomyces pombe.</title>
        <authorList>
            <person name="Matsuyama A."/>
            <person name="Arai R."/>
            <person name="Yashiroda Y."/>
            <person name="Shirai A."/>
            <person name="Kamata A."/>
            <person name="Sekido S."/>
            <person name="Kobayashi Y."/>
            <person name="Hashimoto A."/>
            <person name="Hamamoto M."/>
            <person name="Hiraoka Y."/>
            <person name="Horinouchi S."/>
            <person name="Yoshida M."/>
        </authorList>
    </citation>
    <scope>SUBCELLULAR LOCATION [LARGE SCALE ANALYSIS]</scope>
</reference>
<reference key="3">
    <citation type="journal article" date="2010" name="Proc. Natl. Acad. Sci. U.S.A.">
        <title>Structure of the 26S proteasome from Schizosaccharomyces pombe at subnanometer resolution.</title>
        <authorList>
            <person name="Bohn S."/>
            <person name="Beck F."/>
            <person name="Sakata E."/>
            <person name="Walzthoeni T."/>
            <person name="Beck M."/>
            <person name="Aebersold R."/>
            <person name="Foerster F."/>
            <person name="Baumeister W."/>
            <person name="Nickell S."/>
        </authorList>
    </citation>
    <scope>SUBUNIT</scope>
    <scope>FUNCTION</scope>
</reference>
<proteinExistence type="evidence at protein level"/>